<accession>P77551</accession>
<name>RZPR_ECOLI</name>
<organism>
    <name type="scientific">Escherichia coli (strain K12)</name>
    <dbReference type="NCBI Taxonomy" id="83333"/>
    <lineage>
        <taxon>Bacteria</taxon>
        <taxon>Pseudomonadati</taxon>
        <taxon>Pseudomonadota</taxon>
        <taxon>Gammaproteobacteria</taxon>
        <taxon>Enterobacterales</taxon>
        <taxon>Enterobacteriaceae</taxon>
        <taxon>Escherichia</taxon>
    </lineage>
</organism>
<comment type="interaction">
    <interactant intactId="EBI-9135212">
        <id>P77551</id>
    </interactant>
    <interactant intactId="EBI-1133806">
        <id>P0A8P6</id>
        <label>xerC</label>
    </interactant>
    <organismsDiffer>false</organismsDiffer>
    <experiments>2</experiments>
</comment>
<comment type="miscellaneous">
    <text evidence="1">Encoded in the Rac prophage.</text>
</comment>
<comment type="caution">
    <text evidence="1">Could be the product of a pseudogene, it is missing about 60 N-terminal residues compared to orthologs.</text>
</comment>
<dbReference type="EC" id="3.4.-.-"/>
<dbReference type="EMBL" id="U00096">
    <property type="status" value="NOT_ANNOTATED_CDS"/>
    <property type="molecule type" value="Genomic_DNA"/>
</dbReference>
<dbReference type="EMBL" id="AP009048">
    <property type="protein sequence ID" value="BAA14959.2"/>
    <property type="molecule type" value="Genomic_DNA"/>
</dbReference>
<dbReference type="PIR" id="E64886">
    <property type="entry name" value="E64886"/>
</dbReference>
<dbReference type="SMR" id="P77551"/>
<dbReference type="BioGRID" id="4259383">
    <property type="interactions" value="2"/>
</dbReference>
<dbReference type="FunCoup" id="P77551">
    <property type="interactions" value="10"/>
</dbReference>
<dbReference type="IntAct" id="P77551">
    <property type="interactions" value="4"/>
</dbReference>
<dbReference type="KEGG" id="ecj:JW5212"/>
<dbReference type="EchoBASE" id="EB3149"/>
<dbReference type="InParanoid" id="P77551"/>
<dbReference type="OMA" id="AAIRNYW"/>
<dbReference type="Proteomes" id="UP000000625">
    <property type="component" value="Chromosome"/>
</dbReference>
<dbReference type="GO" id="GO:0008233">
    <property type="term" value="F:peptidase activity"/>
    <property type="evidence" value="ECO:0007669"/>
    <property type="project" value="UniProtKB-KW"/>
</dbReference>
<dbReference type="GO" id="GO:0042742">
    <property type="term" value="P:defense response to bacterium"/>
    <property type="evidence" value="ECO:0007669"/>
    <property type="project" value="UniProtKB-KW"/>
</dbReference>
<dbReference type="GO" id="GO:0006508">
    <property type="term" value="P:proteolysis"/>
    <property type="evidence" value="ECO:0007669"/>
    <property type="project" value="UniProtKB-KW"/>
</dbReference>
<dbReference type="GO" id="GO:0044659">
    <property type="term" value="P:viral release from host cell by cytolysis"/>
    <property type="evidence" value="ECO:0007669"/>
    <property type="project" value="InterPro"/>
</dbReference>
<dbReference type="InterPro" id="IPR004929">
    <property type="entry name" value="I-spanin"/>
</dbReference>
<dbReference type="Pfam" id="PF03245">
    <property type="entry name" value="Phage_lysis"/>
    <property type="match status" value="1"/>
</dbReference>
<feature type="chain" id="PRO_0000077573" description="Putative endopeptidase RzpR">
    <location>
        <begin position="1"/>
        <end position="99"/>
    </location>
</feature>
<sequence length="99" mass="11070">MRQRDVAALDAKYTKELADAKAENDALRDDVAAGRRRLHIKAVCQSVREATTASGVDNAASPRLADTAERDYFTLRERLVMMQAQLEGAQQYITEQCLK</sequence>
<protein>
    <recommendedName>
        <fullName evidence="1">Putative endopeptidase RzpR</fullName>
        <ecNumber>3.4.-.-</ecNumber>
    </recommendedName>
    <alternativeName>
        <fullName>Putative Rz endopeptidase from lambdoid prophage Rac</fullName>
    </alternativeName>
</protein>
<proteinExistence type="uncertain"/>
<gene>
    <name type="primary">rzpR</name>
    <name type="synonym">ydaX</name>
    <name type="ordered locus">b1362</name>
    <name type="ordered locus">JW5212</name>
</gene>
<evidence type="ECO:0000305" key="1"/>
<keyword id="KW-0929">Antimicrobial</keyword>
<keyword id="KW-0081">Bacteriolytic enzyme</keyword>
<keyword id="KW-0378">Hydrolase</keyword>
<keyword id="KW-0645">Protease</keyword>
<keyword id="KW-1185">Reference proteome</keyword>
<reference key="1">
    <citation type="journal article" date="1996" name="DNA Res.">
        <title>A 570-kb DNA sequence of the Escherichia coli K-12 genome corresponding to the 28.0-40.1 min region on the linkage map.</title>
        <authorList>
            <person name="Aiba H."/>
            <person name="Baba T."/>
            <person name="Fujita K."/>
            <person name="Hayashi K."/>
            <person name="Inada T."/>
            <person name="Isono K."/>
            <person name="Itoh T."/>
            <person name="Kasai H."/>
            <person name="Kashimoto K."/>
            <person name="Kimura S."/>
            <person name="Kitakawa M."/>
            <person name="Kitagawa M."/>
            <person name="Makino K."/>
            <person name="Miki T."/>
            <person name="Mizobuchi K."/>
            <person name="Mori H."/>
            <person name="Mori T."/>
            <person name="Motomura K."/>
            <person name="Nakade S."/>
            <person name="Nakamura Y."/>
            <person name="Nashimoto H."/>
            <person name="Nishio Y."/>
            <person name="Oshima T."/>
            <person name="Saito N."/>
            <person name="Sampei G."/>
            <person name="Seki Y."/>
            <person name="Sivasundaram S."/>
            <person name="Tagami H."/>
            <person name="Takeda J."/>
            <person name="Takemoto K."/>
            <person name="Takeuchi Y."/>
            <person name="Wada C."/>
            <person name="Yamamoto Y."/>
            <person name="Horiuchi T."/>
        </authorList>
    </citation>
    <scope>NUCLEOTIDE SEQUENCE [LARGE SCALE GENOMIC DNA]</scope>
    <source>
        <strain>K12 / W3110 / ATCC 27325 / DSM 5911</strain>
    </source>
</reference>
<reference key="2">
    <citation type="journal article" date="1997" name="Science">
        <title>The complete genome sequence of Escherichia coli K-12.</title>
        <authorList>
            <person name="Blattner F.R."/>
            <person name="Plunkett G. III"/>
            <person name="Bloch C.A."/>
            <person name="Perna N.T."/>
            <person name="Burland V."/>
            <person name="Riley M."/>
            <person name="Collado-Vides J."/>
            <person name="Glasner J.D."/>
            <person name="Rode C.K."/>
            <person name="Mayhew G.F."/>
            <person name="Gregor J."/>
            <person name="Davis N.W."/>
            <person name="Kirkpatrick H.A."/>
            <person name="Goeden M.A."/>
            <person name="Rose D.J."/>
            <person name="Mau B."/>
            <person name="Shao Y."/>
        </authorList>
    </citation>
    <scope>NUCLEOTIDE SEQUENCE [LARGE SCALE GENOMIC DNA]</scope>
    <source>
        <strain>K12 / MG1655 / ATCC 47076</strain>
    </source>
</reference>
<reference key="3">
    <citation type="journal article" date="2006" name="Mol. Syst. Biol.">
        <title>Highly accurate genome sequences of Escherichia coli K-12 strains MG1655 and W3110.</title>
        <authorList>
            <person name="Hayashi K."/>
            <person name="Morooka N."/>
            <person name="Yamamoto Y."/>
            <person name="Fujita K."/>
            <person name="Isono K."/>
            <person name="Choi S."/>
            <person name="Ohtsubo E."/>
            <person name="Baba T."/>
            <person name="Wanner B.L."/>
            <person name="Mori H."/>
            <person name="Horiuchi T."/>
        </authorList>
    </citation>
    <scope>NUCLEOTIDE SEQUENCE [LARGE SCALE GENOMIC DNA]</scope>
    <source>
        <strain>K12 / W3110 / ATCC 27325 / DSM 5911</strain>
    </source>
</reference>